<dbReference type="EMBL" id="AB017069">
    <property type="protein sequence ID" value="BAB09103.1"/>
    <property type="molecule type" value="Genomic_DNA"/>
</dbReference>
<dbReference type="EMBL" id="CP002688">
    <property type="protein sequence ID" value="AED94164.1"/>
    <property type="molecule type" value="Genomic_DNA"/>
</dbReference>
<dbReference type="EMBL" id="CP002688">
    <property type="protein sequence ID" value="ANM68722.1"/>
    <property type="molecule type" value="Genomic_DNA"/>
</dbReference>
<dbReference type="EMBL" id="AK226936">
    <property type="protein sequence ID" value="BAE99006.1"/>
    <property type="molecule type" value="mRNA"/>
</dbReference>
<dbReference type="RefSeq" id="NP_001330448.1">
    <property type="nucleotide sequence ID" value="NM_001344181.1"/>
</dbReference>
<dbReference type="RefSeq" id="NP_198547.3">
    <property type="nucleotide sequence ID" value="NM_123090.4"/>
</dbReference>
<dbReference type="FunCoup" id="Q9FHT4">
    <property type="interactions" value="2657"/>
</dbReference>
<dbReference type="STRING" id="3702.Q9FHT4"/>
<dbReference type="PaxDb" id="3702-AT5G37310.1"/>
<dbReference type="ProteomicsDB" id="234452"/>
<dbReference type="EnsemblPlants" id="AT5G37310.1">
    <property type="protein sequence ID" value="AT5G37310.1"/>
    <property type="gene ID" value="AT5G37310"/>
</dbReference>
<dbReference type="EnsemblPlants" id="AT5G37310.2">
    <property type="protein sequence ID" value="AT5G37310.2"/>
    <property type="gene ID" value="AT5G37310"/>
</dbReference>
<dbReference type="GeneID" id="833705"/>
<dbReference type="Gramene" id="AT5G37310.1">
    <property type="protein sequence ID" value="AT5G37310.1"/>
    <property type="gene ID" value="AT5G37310"/>
</dbReference>
<dbReference type="Gramene" id="AT5G37310.2">
    <property type="protein sequence ID" value="AT5G37310.2"/>
    <property type="gene ID" value="AT5G37310"/>
</dbReference>
<dbReference type="KEGG" id="ath:AT5G37310"/>
<dbReference type="Araport" id="AT5G37310"/>
<dbReference type="TAIR" id="AT5G37310"/>
<dbReference type="eggNOG" id="KOG1277">
    <property type="taxonomic scope" value="Eukaryota"/>
</dbReference>
<dbReference type="HOGENOM" id="CLU_010714_0_2_1"/>
<dbReference type="InParanoid" id="Q9FHT4"/>
<dbReference type="OMA" id="NWVRNVI"/>
<dbReference type="PhylomeDB" id="Q9FHT4"/>
<dbReference type="CD-CODE" id="4299E36E">
    <property type="entry name" value="Nucleolus"/>
</dbReference>
<dbReference type="PRO" id="PR:Q9FHT4"/>
<dbReference type="Proteomes" id="UP000006548">
    <property type="component" value="Chromosome 5"/>
</dbReference>
<dbReference type="ExpressionAtlas" id="Q9FHT4">
    <property type="expression patterns" value="baseline and differential"/>
</dbReference>
<dbReference type="GO" id="GO:0005768">
    <property type="term" value="C:endosome"/>
    <property type="evidence" value="ECO:0007005"/>
    <property type="project" value="TAIR"/>
</dbReference>
<dbReference type="GO" id="GO:0010008">
    <property type="term" value="C:endosome membrane"/>
    <property type="evidence" value="ECO:0007669"/>
    <property type="project" value="UniProtKB-SubCell"/>
</dbReference>
<dbReference type="GO" id="GO:0005794">
    <property type="term" value="C:Golgi apparatus"/>
    <property type="evidence" value="ECO:0007005"/>
    <property type="project" value="TAIR"/>
</dbReference>
<dbReference type="GO" id="GO:0000139">
    <property type="term" value="C:Golgi membrane"/>
    <property type="evidence" value="ECO:0007669"/>
    <property type="project" value="UniProtKB-SubCell"/>
</dbReference>
<dbReference type="GO" id="GO:0000138">
    <property type="term" value="C:Golgi trans cisterna"/>
    <property type="evidence" value="ECO:0007005"/>
    <property type="project" value="TAIR"/>
</dbReference>
<dbReference type="GO" id="GO:0009505">
    <property type="term" value="C:plant-type cell wall"/>
    <property type="evidence" value="ECO:0007005"/>
    <property type="project" value="TAIR"/>
</dbReference>
<dbReference type="GO" id="GO:0005802">
    <property type="term" value="C:trans-Golgi network"/>
    <property type="evidence" value="ECO:0007005"/>
    <property type="project" value="TAIR"/>
</dbReference>
<dbReference type="InterPro" id="IPR004240">
    <property type="entry name" value="EMP70"/>
</dbReference>
<dbReference type="InterPro" id="IPR036259">
    <property type="entry name" value="MFS_trans_sf"/>
</dbReference>
<dbReference type="PANTHER" id="PTHR10766:SF170">
    <property type="entry name" value="TRANSMEMBRANE 9 SUPERFAMILY MEMBER 4"/>
    <property type="match status" value="1"/>
</dbReference>
<dbReference type="PANTHER" id="PTHR10766">
    <property type="entry name" value="TRANSMEMBRANE 9 SUPERFAMILY PROTEIN"/>
    <property type="match status" value="1"/>
</dbReference>
<dbReference type="Pfam" id="PF02990">
    <property type="entry name" value="EMP70"/>
    <property type="match status" value="1"/>
</dbReference>
<dbReference type="SUPFAM" id="SSF103473">
    <property type="entry name" value="MFS general substrate transporter"/>
    <property type="match status" value="1"/>
</dbReference>
<accession>Q9FHT4</accession>
<sequence length="593" mass="68079">MVLLPSMTSLLLVFLFLYGVSPVISDGSDHRYKVGDDVPLYANKVGPFHNPSETYRYFDLPFCSSAPVKEKKEALGEVLNGDRLVSAPYKLEFLGEKNSEVACRKRLSREDVAKFRDVIAKDYYFQMYYDDLPIWGFLGKVVKEGKTDPSEYKYYLFNHLQFEIFYNKDRVIEIIVRTDQNFLVDLTEDKEVQVDFTYTVRWKETEIPFEKRMEKYSLASSMPHHLEIHWFSIINSCVTVLLLTGFLATILMRVLKNDFVKYAHDEEAVDDQEETGWKLIHGDVFRFPKHKSLLAAALGSGTQLFTLAVFIFMLALVGVFYPYNRGALFTALVVIYALTSGIAGYTAASFYCQLEGTNWVRNVILTGSLFCGPLLITFSFLNTVAIAYQATAALPFGTIVVIFLIWALVTSPLLILGGIAGKNRKSEFQAPCRTTKYPREIPPMRWYRRTLPQMAMAGFLPFSAIYIELYYIFASVWGHRIYTIYSILSIVFLILVIVTAFITVALTYFQLAAEDHEWWWRSLLCGGSTGLFIYAYCLYYYYARSDMSGFMQTSFFFGYMACICYGFFLMLGTIGFCASLLFVRHIYRSIKCE</sequence>
<gene>
    <name evidence="4" type="primary">TMN4</name>
    <name evidence="5" type="synonym">EMP10</name>
    <name evidence="7" type="ordered locus">At5g37310</name>
    <name evidence="8" type="ORF">MNJ8.10</name>
</gene>
<comment type="subcellular location">
    <subcellularLocation>
        <location evidence="1">Endosome membrane</location>
        <topology evidence="3">Multi-pass membrane protein</topology>
    </subcellularLocation>
    <subcellularLocation>
        <location evidence="2">Golgi apparatus membrane</location>
        <topology evidence="3">Multi-pass membrane protein</topology>
    </subcellularLocation>
</comment>
<comment type="domain">
    <text evidence="2">The C-terminal KXD/E motif functions as a Golgi retention signal, certainly through the binding to the COP1 coatomer.</text>
</comment>
<comment type="similarity">
    <text>Belongs to the nonaspanin (TM9SF) (TC 9.A.2) family.</text>
</comment>
<proteinExistence type="evidence at transcript level"/>
<protein>
    <recommendedName>
        <fullName evidence="6">Transmembrane 9 superfamily member 4</fullName>
    </recommendedName>
    <alternativeName>
        <fullName evidence="5">Endomembrane protein 10</fullName>
    </alternativeName>
    <alternativeName>
        <fullName evidence="4">Transmembrane nine protein 4</fullName>
        <shortName evidence="4">AtTMN4</shortName>
    </alternativeName>
</protein>
<name>TMN4_ARATH</name>
<organism evidence="8">
    <name type="scientific">Arabidopsis thaliana</name>
    <name type="common">Mouse-ear cress</name>
    <dbReference type="NCBI Taxonomy" id="3702"/>
    <lineage>
        <taxon>Eukaryota</taxon>
        <taxon>Viridiplantae</taxon>
        <taxon>Streptophyta</taxon>
        <taxon>Embryophyta</taxon>
        <taxon>Tracheophyta</taxon>
        <taxon>Spermatophyta</taxon>
        <taxon>Magnoliopsida</taxon>
        <taxon>eudicotyledons</taxon>
        <taxon>Gunneridae</taxon>
        <taxon>Pentapetalae</taxon>
        <taxon>rosids</taxon>
        <taxon>malvids</taxon>
        <taxon>Brassicales</taxon>
        <taxon>Brassicaceae</taxon>
        <taxon>Camelineae</taxon>
        <taxon>Arabidopsis</taxon>
    </lineage>
</organism>
<keyword id="KW-0967">Endosome</keyword>
<keyword id="KW-0333">Golgi apparatus</keyword>
<keyword id="KW-0472">Membrane</keyword>
<keyword id="KW-1185">Reference proteome</keyword>
<keyword id="KW-0732">Signal</keyword>
<keyword id="KW-0812">Transmembrane</keyword>
<keyword id="KW-1133">Transmembrane helix</keyword>
<feature type="signal peptide" evidence="3">
    <location>
        <begin position="1"/>
        <end position="25"/>
    </location>
</feature>
<feature type="chain" id="PRO_0000431261" description="Transmembrane 9 superfamily member 4" evidence="3">
    <location>
        <begin position="26"/>
        <end position="593"/>
    </location>
</feature>
<feature type="topological domain" description="Lumenal" evidence="6">
    <location>
        <begin position="26"/>
        <end position="230"/>
    </location>
</feature>
<feature type="transmembrane region" description="Helical; Name=1" evidence="3">
    <location>
        <begin position="231"/>
        <end position="251"/>
    </location>
</feature>
<feature type="topological domain" description="Cytoplasmic" evidence="6">
    <location>
        <begin position="252"/>
        <end position="303"/>
    </location>
</feature>
<feature type="transmembrane region" description="Helical; Name=2" evidence="3">
    <location>
        <begin position="304"/>
        <end position="324"/>
    </location>
</feature>
<feature type="topological domain" description="Lumenal" evidence="6">
    <location>
        <begin position="325"/>
        <end position="326"/>
    </location>
</feature>
<feature type="transmembrane region" description="Helical; Name=3" evidence="3">
    <location>
        <begin position="327"/>
        <end position="347"/>
    </location>
</feature>
<feature type="topological domain" description="Cytoplasmic" evidence="6">
    <location>
        <begin position="348"/>
        <end position="366"/>
    </location>
</feature>
<feature type="transmembrane region" description="Helical; Name=4" evidence="3">
    <location>
        <begin position="367"/>
        <end position="387"/>
    </location>
</feature>
<feature type="topological domain" description="Lumenal" evidence="6">
    <location>
        <begin position="388"/>
        <end position="398"/>
    </location>
</feature>
<feature type="transmembrane region" description="Helical; Name=5" evidence="3">
    <location>
        <begin position="399"/>
        <end position="419"/>
    </location>
</feature>
<feature type="topological domain" description="Cytoplasmic" evidence="6">
    <location>
        <begin position="420"/>
        <end position="453"/>
    </location>
</feature>
<feature type="transmembrane region" description="Helical; Name=6" evidence="3">
    <location>
        <begin position="454"/>
        <end position="474"/>
    </location>
</feature>
<feature type="topological domain" description="Lumenal" evidence="6">
    <location>
        <begin position="475"/>
        <end position="486"/>
    </location>
</feature>
<feature type="transmembrane region" description="Helical; Name=7" evidence="3">
    <location>
        <begin position="487"/>
        <end position="507"/>
    </location>
</feature>
<feature type="topological domain" description="Cytoplasmic" evidence="6">
    <location>
        <begin position="508"/>
        <end position="522"/>
    </location>
</feature>
<feature type="transmembrane region" description="Helical; Name=8" evidence="3">
    <location>
        <begin position="523"/>
        <end position="543"/>
    </location>
</feature>
<feature type="topological domain" description="Lumenal" evidence="6">
    <location>
        <begin position="544"/>
        <end position="554"/>
    </location>
</feature>
<feature type="transmembrane region" description="Helical; Name=9" evidence="3">
    <location>
        <begin position="555"/>
        <end position="575"/>
    </location>
</feature>
<feature type="topological domain" description="Cytoplasmic" evidence="6">
    <location>
        <begin position="576"/>
        <end position="593"/>
    </location>
</feature>
<feature type="short sequence motif" description="Endoplasmic reticulum export signal" evidence="2">
    <location>
        <begin position="582"/>
        <end position="587"/>
    </location>
</feature>
<feature type="short sequence motif" description="Golgi retention signal" evidence="2">
    <location>
        <begin position="591"/>
        <end position="593"/>
    </location>
</feature>
<reference key="1">
    <citation type="submission" date="1998-08" db="EMBL/GenBank/DDBJ databases">
        <title>Structural analysis of Arabidopsis thaliana chromosome 5. XI.</title>
        <authorList>
            <person name="Kaneko T."/>
            <person name="Katoh T."/>
            <person name="Asamizu E."/>
            <person name="Sato S."/>
            <person name="Nakamura Y."/>
            <person name="Kotani H."/>
            <person name="Tabata S."/>
        </authorList>
    </citation>
    <scope>NUCLEOTIDE SEQUENCE [LARGE SCALE GENOMIC DNA]</scope>
    <source>
        <strain>cv. Columbia</strain>
    </source>
</reference>
<reference key="2">
    <citation type="journal article" date="2017" name="Plant J.">
        <title>Araport11: a complete reannotation of the Arabidopsis thaliana reference genome.</title>
        <authorList>
            <person name="Cheng C.Y."/>
            <person name="Krishnakumar V."/>
            <person name="Chan A.P."/>
            <person name="Thibaud-Nissen F."/>
            <person name="Schobel S."/>
            <person name="Town C.D."/>
        </authorList>
    </citation>
    <scope>GENOME REANNOTATION</scope>
    <source>
        <strain>cv. Columbia</strain>
    </source>
</reference>
<reference key="3">
    <citation type="submission" date="2006-07" db="EMBL/GenBank/DDBJ databases">
        <title>Large-scale analysis of RIKEN Arabidopsis full-length (RAFL) cDNAs.</title>
        <authorList>
            <person name="Totoki Y."/>
            <person name="Seki M."/>
            <person name="Ishida J."/>
            <person name="Nakajima M."/>
            <person name="Enju A."/>
            <person name="Kamiya A."/>
            <person name="Narusaka M."/>
            <person name="Shin-i T."/>
            <person name="Nakagawa M."/>
            <person name="Sakamoto N."/>
            <person name="Oishi K."/>
            <person name="Kohara Y."/>
            <person name="Kobayashi M."/>
            <person name="Toyoda A."/>
            <person name="Sakaki Y."/>
            <person name="Sakurai T."/>
            <person name="Iida K."/>
            <person name="Akiyama K."/>
            <person name="Satou M."/>
            <person name="Toyoda T."/>
            <person name="Konagaya A."/>
            <person name="Carninci P."/>
            <person name="Kawai J."/>
            <person name="Hayashizaki Y."/>
            <person name="Shinozaki K."/>
        </authorList>
    </citation>
    <scope>NUCLEOTIDE SEQUENCE [LARGE SCALE MRNA]</scope>
    <source>
        <strain>cv. Columbia</strain>
    </source>
</reference>
<reference key="4">
    <citation type="journal article" date="2010" name="Physiol. Plantarum">
        <title>Transmembrane nine proteins in yeast and Arabidopsis affect cellular metal contents without changing vacuolar morphology.</title>
        <authorList>
            <person name="Hegelund J.N."/>
            <person name="Jahn T.P."/>
            <person name="Baekgaard L."/>
            <person name="Palmgren M.G."/>
            <person name="Schjoerring J.K."/>
        </authorList>
    </citation>
    <scope>GENE FAMILY</scope>
    <scope>NOMENCLATURE</scope>
</reference>
<reference key="5">
    <citation type="journal article" date="2012" name="Plant Cell">
        <title>The Golgi-localized Arabidopsis endomembrane protein12 contains both endoplasmic reticulum export and Golgi retention signals at its C terminus.</title>
        <authorList>
            <person name="Gao C."/>
            <person name="Yu C.K."/>
            <person name="Qu S."/>
            <person name="San M.W."/>
            <person name="Li K.Y."/>
            <person name="Lo S.W."/>
            <person name="Jiang L."/>
        </authorList>
    </citation>
    <scope>GENE FAMILY</scope>
    <scope>NOMENCLATURE</scope>
</reference>
<evidence type="ECO:0000250" key="1">
    <source>
        <dbReference type="UniProtKB" id="P32802"/>
    </source>
</evidence>
<evidence type="ECO:0000250" key="2">
    <source>
        <dbReference type="UniProtKB" id="Q940G0"/>
    </source>
</evidence>
<evidence type="ECO:0000255" key="3"/>
<evidence type="ECO:0000303" key="4">
    <source>
    </source>
</evidence>
<evidence type="ECO:0000303" key="5">
    <source>
    </source>
</evidence>
<evidence type="ECO:0000305" key="6"/>
<evidence type="ECO:0000312" key="7">
    <source>
        <dbReference type="Araport" id="AT5G37310"/>
    </source>
</evidence>
<evidence type="ECO:0000312" key="8">
    <source>
        <dbReference type="EMBL" id="BAB09103.1"/>
    </source>
</evidence>